<accession>Q4UMS9</accession>
<evidence type="ECO:0000255" key="1">
    <source>
        <dbReference type="HAMAP-Rule" id="MF_01325"/>
    </source>
</evidence>
<evidence type="ECO:0000256" key="2">
    <source>
        <dbReference type="SAM" id="MobiDB-lite"/>
    </source>
</evidence>
<evidence type="ECO:0000305" key="3"/>
<reference key="1">
    <citation type="journal article" date="2005" name="PLoS Biol.">
        <title>The genome sequence of Rickettsia felis identifies the first putative conjugative plasmid in an obligate intracellular parasite.</title>
        <authorList>
            <person name="Ogata H."/>
            <person name="Renesto P."/>
            <person name="Audic S."/>
            <person name="Robert C."/>
            <person name="Blanc G."/>
            <person name="Fournier P.-E."/>
            <person name="Parinello H."/>
            <person name="Claverie J.-M."/>
            <person name="Raoult D."/>
        </authorList>
    </citation>
    <scope>NUCLEOTIDE SEQUENCE [LARGE SCALE GENOMIC DNA]</scope>
    <source>
        <strain>ATCC VR-1525 / URRWXCal2</strain>
    </source>
</reference>
<comment type="function">
    <text evidence="1">One of the primary rRNA binding proteins, it binds directly near the 3'-end of the 23S rRNA, where it nucleates assembly of the 50S subunit.</text>
</comment>
<comment type="subunit">
    <text evidence="1">Part of the 50S ribosomal subunit. Forms a cluster with proteins L14 and L19.</text>
</comment>
<comment type="PTM">
    <text evidence="1">Methylated by PrmB.</text>
</comment>
<comment type="similarity">
    <text evidence="1">Belongs to the universal ribosomal protein uL3 family.</text>
</comment>
<feature type="chain" id="PRO_0000241403" description="Large ribosomal subunit protein uL3">
    <location>
        <begin position="1"/>
        <end position="215"/>
    </location>
</feature>
<feature type="region of interest" description="Disordered" evidence="2">
    <location>
        <begin position="136"/>
        <end position="155"/>
    </location>
</feature>
<feature type="modified residue" description="N5-methylglutamine" evidence="1">
    <location>
        <position position="151"/>
    </location>
</feature>
<dbReference type="EMBL" id="CP000053">
    <property type="protein sequence ID" value="AAY61129.1"/>
    <property type="molecule type" value="Genomic_DNA"/>
</dbReference>
<dbReference type="SMR" id="Q4UMS9"/>
<dbReference type="STRING" id="315456.RF_0278"/>
<dbReference type="KEGG" id="rfe:RF_0278"/>
<dbReference type="eggNOG" id="COG0087">
    <property type="taxonomic scope" value="Bacteria"/>
</dbReference>
<dbReference type="HOGENOM" id="CLU_044142_2_0_5"/>
<dbReference type="OrthoDB" id="9806135at2"/>
<dbReference type="Proteomes" id="UP000008548">
    <property type="component" value="Chromosome"/>
</dbReference>
<dbReference type="GO" id="GO:1990904">
    <property type="term" value="C:ribonucleoprotein complex"/>
    <property type="evidence" value="ECO:0007669"/>
    <property type="project" value="UniProtKB-KW"/>
</dbReference>
<dbReference type="GO" id="GO:0005840">
    <property type="term" value="C:ribosome"/>
    <property type="evidence" value="ECO:0007669"/>
    <property type="project" value="UniProtKB-KW"/>
</dbReference>
<dbReference type="GO" id="GO:0019843">
    <property type="term" value="F:rRNA binding"/>
    <property type="evidence" value="ECO:0007669"/>
    <property type="project" value="UniProtKB-UniRule"/>
</dbReference>
<dbReference type="GO" id="GO:0003735">
    <property type="term" value="F:structural constituent of ribosome"/>
    <property type="evidence" value="ECO:0007669"/>
    <property type="project" value="InterPro"/>
</dbReference>
<dbReference type="GO" id="GO:0006412">
    <property type="term" value="P:translation"/>
    <property type="evidence" value="ECO:0007669"/>
    <property type="project" value="UniProtKB-UniRule"/>
</dbReference>
<dbReference type="FunFam" id="2.40.30.10:FF:000004">
    <property type="entry name" value="50S ribosomal protein L3"/>
    <property type="match status" value="1"/>
</dbReference>
<dbReference type="Gene3D" id="3.30.160.810">
    <property type="match status" value="1"/>
</dbReference>
<dbReference type="Gene3D" id="2.40.30.10">
    <property type="entry name" value="Translation factors"/>
    <property type="match status" value="1"/>
</dbReference>
<dbReference type="HAMAP" id="MF_01325_B">
    <property type="entry name" value="Ribosomal_uL3_B"/>
    <property type="match status" value="1"/>
</dbReference>
<dbReference type="InterPro" id="IPR000597">
    <property type="entry name" value="Ribosomal_uL3"/>
</dbReference>
<dbReference type="InterPro" id="IPR019927">
    <property type="entry name" value="Ribosomal_uL3_bac/org-type"/>
</dbReference>
<dbReference type="InterPro" id="IPR019926">
    <property type="entry name" value="Ribosomal_uL3_CS"/>
</dbReference>
<dbReference type="InterPro" id="IPR009000">
    <property type="entry name" value="Transl_B-barrel_sf"/>
</dbReference>
<dbReference type="NCBIfam" id="TIGR03625">
    <property type="entry name" value="L3_bact"/>
    <property type="match status" value="1"/>
</dbReference>
<dbReference type="PANTHER" id="PTHR11229">
    <property type="entry name" value="50S RIBOSOMAL PROTEIN L3"/>
    <property type="match status" value="1"/>
</dbReference>
<dbReference type="PANTHER" id="PTHR11229:SF16">
    <property type="entry name" value="LARGE RIBOSOMAL SUBUNIT PROTEIN UL3C"/>
    <property type="match status" value="1"/>
</dbReference>
<dbReference type="Pfam" id="PF00297">
    <property type="entry name" value="Ribosomal_L3"/>
    <property type="match status" value="1"/>
</dbReference>
<dbReference type="SUPFAM" id="SSF50447">
    <property type="entry name" value="Translation proteins"/>
    <property type="match status" value="1"/>
</dbReference>
<dbReference type="PROSITE" id="PS00474">
    <property type="entry name" value="RIBOSOMAL_L3"/>
    <property type="match status" value="1"/>
</dbReference>
<gene>
    <name evidence="1" type="primary">rplC</name>
    <name type="ordered locus">RF_0278</name>
</gene>
<name>RL3_RICFE</name>
<organism>
    <name type="scientific">Rickettsia felis (strain ATCC VR-1525 / URRWXCal2)</name>
    <name type="common">Rickettsia azadi</name>
    <dbReference type="NCBI Taxonomy" id="315456"/>
    <lineage>
        <taxon>Bacteria</taxon>
        <taxon>Pseudomonadati</taxon>
        <taxon>Pseudomonadota</taxon>
        <taxon>Alphaproteobacteria</taxon>
        <taxon>Rickettsiales</taxon>
        <taxon>Rickettsiaceae</taxon>
        <taxon>Rickettsieae</taxon>
        <taxon>Rickettsia</taxon>
        <taxon>spotted fever group</taxon>
    </lineage>
</organism>
<proteinExistence type="inferred from homology"/>
<protein>
    <recommendedName>
        <fullName evidence="1">Large ribosomal subunit protein uL3</fullName>
    </recommendedName>
    <alternativeName>
        <fullName evidence="3">50S ribosomal protein L3</fullName>
    </alternativeName>
</protein>
<sequence>MRTGIIAQKIGMTSVFNDKGERISLTLVKVDDCQVVGHKTLEKHGYNALVIGIKDKKISRVTKPMKQVFANAKISPKTKLKEFRISEENFIDIAASLEVDYFTAGQFVDITATTIGKGFAGSMKRHNFRGLEASHGVSISHRSHGSTGQRQDPGKVFKGKKMAGHMGCNQVTIQNLKIFAVDKERKLIMIQGSIPGHKNSYLSVKDAIKKISITV</sequence>
<keyword id="KW-0488">Methylation</keyword>
<keyword id="KW-0687">Ribonucleoprotein</keyword>
<keyword id="KW-0689">Ribosomal protein</keyword>
<keyword id="KW-0694">RNA-binding</keyword>
<keyword id="KW-0699">rRNA-binding</keyword>